<keyword id="KW-0963">Cytoplasm</keyword>
<keyword id="KW-0206">Cytoskeleton</keyword>
<keyword id="KW-0539">Nucleus</keyword>
<keyword id="KW-1185">Reference proteome</keyword>
<keyword id="KW-0677">Repeat</keyword>
<keyword id="KW-0833">Ubl conjugation pathway</keyword>
<keyword id="KW-0853">WD repeat</keyword>
<gene>
    <name type="primary">dcaf12</name>
    <name type="synonym">wdr40a</name>
    <name type="ORF">zgc:154031</name>
</gene>
<evidence type="ECO:0000250" key="1">
    <source>
        <dbReference type="UniProtKB" id="Q5T6F0"/>
    </source>
</evidence>
<evidence type="ECO:0000305" key="2"/>
<protein>
    <recommendedName>
        <fullName evidence="2">DDB1- and CUL4-associated factor 12</fullName>
    </recommendedName>
    <alternativeName>
        <fullName>WD repeat-containing protein 40A</fullName>
    </alternativeName>
</protein>
<name>DCA12_DANRE</name>
<reference key="1">
    <citation type="submission" date="2006-10" db="EMBL/GenBank/DDBJ databases">
        <authorList>
            <consortium name="NIH - Zebrafish Gene Collection (ZGC) project"/>
        </authorList>
    </citation>
    <scope>NUCLEOTIDE SEQUENCE [LARGE SCALE MRNA]</scope>
</reference>
<feature type="chain" id="PRO_0000306844" description="DDB1- and CUL4-associated factor 12">
    <location>
        <begin position="1"/>
        <end position="482"/>
    </location>
</feature>
<feature type="repeat" description="WD 1">
    <location>
        <begin position="167"/>
        <end position="207"/>
    </location>
</feature>
<feature type="repeat" description="WD 2">
    <location>
        <begin position="211"/>
        <end position="249"/>
    </location>
</feature>
<feature type="repeat" description="WD 3">
    <location>
        <begin position="279"/>
        <end position="318"/>
    </location>
</feature>
<feature type="repeat" description="WD 4">
    <location>
        <begin position="367"/>
        <end position="404"/>
    </location>
</feature>
<dbReference type="EMBL" id="BC124796">
    <property type="protein sequence ID" value="AAI24797.1"/>
    <property type="molecule type" value="mRNA"/>
</dbReference>
<dbReference type="RefSeq" id="NP_001071048.1">
    <property type="nucleotide sequence ID" value="NM_001077580.1"/>
</dbReference>
<dbReference type="SMR" id="Q08BB3"/>
<dbReference type="FunCoup" id="Q08BB3">
    <property type="interactions" value="1075"/>
</dbReference>
<dbReference type="STRING" id="7955.ENSDARP00000086448"/>
<dbReference type="PaxDb" id="7955-ENSDARP00000086448"/>
<dbReference type="Ensembl" id="ENSDART00000092015">
    <property type="protein sequence ID" value="ENSDARP00000086448"/>
    <property type="gene ID" value="ENSDARG00000063155"/>
</dbReference>
<dbReference type="GeneID" id="570671"/>
<dbReference type="KEGG" id="dre:570671"/>
<dbReference type="AGR" id="ZFIN:ZDB-GENE-061013-363"/>
<dbReference type="CTD" id="25853"/>
<dbReference type="ZFIN" id="ZDB-GENE-061013-363">
    <property type="gene designation" value="dcaf12"/>
</dbReference>
<dbReference type="eggNOG" id="ENOG502QR7U">
    <property type="taxonomic scope" value="Eukaryota"/>
</dbReference>
<dbReference type="HOGENOM" id="CLU_020124_1_0_1"/>
<dbReference type="InParanoid" id="Q08BB3"/>
<dbReference type="OMA" id="XSRDGSM"/>
<dbReference type="OrthoDB" id="9610195at2759"/>
<dbReference type="PhylomeDB" id="Q08BB3"/>
<dbReference type="TreeFam" id="TF323731"/>
<dbReference type="UniPathway" id="UPA00143"/>
<dbReference type="PRO" id="PR:Q08BB3"/>
<dbReference type="Proteomes" id="UP000000437">
    <property type="component" value="Chromosome 21"/>
</dbReference>
<dbReference type="Bgee" id="ENSDARG00000063155">
    <property type="expression patterns" value="Expressed in testis and 21 other cell types or tissues"/>
</dbReference>
<dbReference type="ExpressionAtlas" id="Q08BB3">
    <property type="expression patterns" value="baseline and differential"/>
</dbReference>
<dbReference type="GO" id="GO:0005813">
    <property type="term" value="C:centrosome"/>
    <property type="evidence" value="ECO:0007669"/>
    <property type="project" value="UniProtKB-SubCell"/>
</dbReference>
<dbReference type="GO" id="GO:0080008">
    <property type="term" value="C:Cul4-RING E3 ubiquitin ligase complex"/>
    <property type="evidence" value="ECO:0000250"/>
    <property type="project" value="UniProtKB"/>
</dbReference>
<dbReference type="GO" id="GO:0005737">
    <property type="term" value="C:cytoplasm"/>
    <property type="evidence" value="ECO:0007669"/>
    <property type="project" value="UniProtKB-SubCell"/>
</dbReference>
<dbReference type="GO" id="GO:0005634">
    <property type="term" value="C:nucleus"/>
    <property type="evidence" value="ECO:0007669"/>
    <property type="project" value="UniProtKB-SubCell"/>
</dbReference>
<dbReference type="GO" id="GO:1990756">
    <property type="term" value="F:ubiquitin-like ligase-substrate adaptor activity"/>
    <property type="evidence" value="ECO:0000250"/>
    <property type="project" value="UniProtKB"/>
</dbReference>
<dbReference type="GO" id="GO:0016567">
    <property type="term" value="P:protein ubiquitination"/>
    <property type="evidence" value="ECO:0007669"/>
    <property type="project" value="UniProtKB-UniPathway"/>
</dbReference>
<dbReference type="GO" id="GO:0010506">
    <property type="term" value="P:regulation of autophagy"/>
    <property type="evidence" value="ECO:0000250"/>
    <property type="project" value="UniProtKB"/>
</dbReference>
<dbReference type="GO" id="GO:0140627">
    <property type="term" value="P:ubiquitin-dependent protein catabolic process via the C-end degron rule pathway"/>
    <property type="evidence" value="ECO:0000250"/>
    <property type="project" value="UniProtKB"/>
</dbReference>
<dbReference type="FunFam" id="2.130.10.10:FF:001190">
    <property type="entry name" value="DDB1 and CUL4 associated factor 12"/>
    <property type="match status" value="1"/>
</dbReference>
<dbReference type="FunFam" id="2.130.10.10:FF:002625">
    <property type="entry name" value="DDB1 and CUL4 associated factor 12"/>
    <property type="match status" value="1"/>
</dbReference>
<dbReference type="Gene3D" id="2.130.10.10">
    <property type="entry name" value="YVTN repeat-like/Quinoprotein amine dehydrogenase"/>
    <property type="match status" value="2"/>
</dbReference>
<dbReference type="InterPro" id="IPR056151">
    <property type="entry name" value="Beta-prop_DCAF12"/>
</dbReference>
<dbReference type="InterPro" id="IPR051191">
    <property type="entry name" value="DCAF12"/>
</dbReference>
<dbReference type="InterPro" id="IPR015943">
    <property type="entry name" value="WD40/YVTN_repeat-like_dom_sf"/>
</dbReference>
<dbReference type="InterPro" id="IPR019775">
    <property type="entry name" value="WD40_repeat_CS"/>
</dbReference>
<dbReference type="InterPro" id="IPR036322">
    <property type="entry name" value="WD40_repeat_dom_sf"/>
</dbReference>
<dbReference type="InterPro" id="IPR001680">
    <property type="entry name" value="WD40_rpt"/>
</dbReference>
<dbReference type="PANTHER" id="PTHR19860:SF16">
    <property type="entry name" value="DDB1- AND CUL4-ASSOCIATED FACTOR 12"/>
    <property type="match status" value="1"/>
</dbReference>
<dbReference type="PANTHER" id="PTHR19860">
    <property type="entry name" value="DDB1- AND CUL4-ASSOCIATED FACTOR 12-RELATED"/>
    <property type="match status" value="1"/>
</dbReference>
<dbReference type="Pfam" id="PF23760">
    <property type="entry name" value="Beta-prop_DCAF12"/>
    <property type="match status" value="2"/>
</dbReference>
<dbReference type="SMART" id="SM00320">
    <property type="entry name" value="WD40"/>
    <property type="match status" value="2"/>
</dbReference>
<dbReference type="SUPFAM" id="SSF50978">
    <property type="entry name" value="WD40 repeat-like"/>
    <property type="match status" value="1"/>
</dbReference>
<dbReference type="PROSITE" id="PS00678">
    <property type="entry name" value="WD_REPEATS_1"/>
    <property type="match status" value="1"/>
</dbReference>
<dbReference type="PROSITE" id="PS50082">
    <property type="entry name" value="WD_REPEATS_2"/>
    <property type="match status" value="1"/>
</dbReference>
<dbReference type="PROSITE" id="PS50294">
    <property type="entry name" value="WD_REPEATS_REGION"/>
    <property type="match status" value="1"/>
</dbReference>
<sequence>MARKTVSRKRKAEEPKEQQFDWCQSAFKRPRVSSSVRHAQHWWQSRRSVVCSVRGREFRPQQQHEWSFQRSLRGFAAGRIPGILREREFSLGRLNKVFASQWLNHRQVVCGTKCNTLFVVDVLSGQITRIPMLKDREGRGEVSQGLGGVGSPFHFHNPGSVGGLDVQQGCGIHAIELNPSRTLLATGGDNPNSLAVYRLPTLDPVCVGDDGHNDWIFSIAWISDTMAVSGSRDGSMGLWEISEDVLSQAEKRQNVEGVPGYSHISHRALKDIPKEYTHPYNCKVRALAFNNSHKELGAVSLDGYFHLWKAEDNLSKELSTKLPYCKENVCLAYGLDWSVYAVGSQAHVSFLDPRQSSQNIKSVSSRERGSGIRSVSFYEHIVTVGTGQGSLLFYDIRAQRFLDGPSSTPGGYRNRTAEGILKLTTGRGWLNHDETWRSYFSDIRSFPNAVYTHCYDDSGTKLFVAGGPLCSGLHGNYAGLWS</sequence>
<comment type="function">
    <text evidence="1">Substrate-recognition component of a DCX (DDB1-CUL4-X-box) E3 ubiquitin-protein ligase complex of the DesCEND (destruction via C-end degrons) pathway, which recognizes a C-degron located at the extreme C terminus of target proteins, leading to their ubiquitination and degradation. The C-degron recognized by the DesCEND pathway is usually a motif of less than ten residues and can be present in full-length proteins, truncated proteins or proteolytically cleaved forms. The DCX(DCAF12) complex specifically recognizes proteins with a diglutamate (Glu-Glu) at the C-terminus leading to their ubiquitination and degradation. Also directly recognizes the C-terminal glutamate-leucine (Glu-Leu) degron as an alternative degron in proteins leading to their ubiquitination and degradation.</text>
</comment>
<comment type="pathway">
    <text evidence="1">Protein modification; protein ubiquitination.</text>
</comment>
<comment type="subunit">
    <text evidence="1">Component of the DCX(DCAF12) E3 ubiquitin ligase complex, at least composed of cul4 (cul4a or cul4b), ddb1, dcaf12 and rbx1.</text>
</comment>
<comment type="subcellular location">
    <subcellularLocation>
        <location evidence="1">Cytoplasm</location>
    </subcellularLocation>
    <subcellularLocation>
        <location evidence="1">Cytoplasm</location>
        <location evidence="1">Cytoskeleton</location>
        <location evidence="1">Microtubule organizing center</location>
        <location evidence="1">Centrosome</location>
    </subcellularLocation>
    <subcellularLocation>
        <location evidence="1">Nucleus</location>
    </subcellularLocation>
</comment>
<comment type="similarity">
    <text evidence="2">Belongs to the WD repeat DCAF12 family.</text>
</comment>
<accession>Q08BB3</accession>
<organism>
    <name type="scientific">Danio rerio</name>
    <name type="common">Zebrafish</name>
    <name type="synonym">Brachydanio rerio</name>
    <dbReference type="NCBI Taxonomy" id="7955"/>
    <lineage>
        <taxon>Eukaryota</taxon>
        <taxon>Metazoa</taxon>
        <taxon>Chordata</taxon>
        <taxon>Craniata</taxon>
        <taxon>Vertebrata</taxon>
        <taxon>Euteleostomi</taxon>
        <taxon>Actinopterygii</taxon>
        <taxon>Neopterygii</taxon>
        <taxon>Teleostei</taxon>
        <taxon>Ostariophysi</taxon>
        <taxon>Cypriniformes</taxon>
        <taxon>Danionidae</taxon>
        <taxon>Danioninae</taxon>
        <taxon>Danio</taxon>
    </lineage>
</organism>
<proteinExistence type="evidence at transcript level"/>